<reference key="1">
    <citation type="journal article" date="2004" name="J. Bacteriol.">
        <title>Novel xylose dehydrogenase in the halophilic archaeon Haloarcula marismortui.</title>
        <authorList>
            <person name="Johnsen U."/>
            <person name="Schonheit P."/>
        </authorList>
    </citation>
    <scope>NUCLEOTIDE SEQUENCE [GENOMIC DNA]</scope>
    <scope>PROTEIN SEQUENCE OF 1-19</scope>
    <scope>SUBUNIT</scope>
    <scope>INDUCTION</scope>
    <scope>FUNCTION</scope>
    <scope>CATALYTIC ACTIVITY</scope>
    <scope>BIOPHYSICOCHEMICAL PROPERTIES</scope>
    <source>
        <strain>ATCC 43049 / DSM 3752 / JCM 8966 / VKM B-1809</strain>
    </source>
</reference>
<reference key="2">
    <citation type="journal article" date="2004" name="Genome Res.">
        <title>Genome sequence of Haloarcula marismortui: a halophilic archaeon from the Dead Sea.</title>
        <authorList>
            <person name="Baliga N.S."/>
            <person name="Bonneau R."/>
            <person name="Facciotti M.T."/>
            <person name="Pan M."/>
            <person name="Glusman G."/>
            <person name="Deutsch E.W."/>
            <person name="Shannon P."/>
            <person name="Chiu Y."/>
            <person name="Weng R.S."/>
            <person name="Gan R.R."/>
            <person name="Hung P."/>
            <person name="Date S.V."/>
            <person name="Marcotte E."/>
            <person name="Hood L."/>
            <person name="Ng W.V."/>
        </authorList>
    </citation>
    <scope>NUCLEOTIDE SEQUENCE [LARGE SCALE GENOMIC DNA]</scope>
    <source>
        <strain>ATCC 43049 / DSM 3752 / JCM 8966 / VKM B-1809</strain>
    </source>
</reference>
<sequence>MNVDALTGGFDRRDWQEQTATDNPVRFAMIGVGWWTTEQAMPAVDAGDLCETTVLVSSDREKAADVAADSETVEHAITYEEFHDGAASDAYDAVYIVTPNALHLPYVETAAELDKAILCEKPMEATIERAERMVEVCDEHDATLMIAYRMHTEPAVRRAKDLIDEGYIGEPLFVHGNMTEPILELVPDPDQWRLDGELSGGCAVMDIGIYPLNTSRFLLDADPVAVRGTVASVQEEFADVPDEHGAFQLDFPGHVYAVCTASQNAHLDSHISVLGTEGKVRVEPAFYPWDDRALQLSHEGTTVEIDFEQIDQMEEEFEYFAHCLLTDTEPYADGEHGLVDINTIKSVYEASETESTVRLD</sequence>
<organism>
    <name type="scientific">Haloarcula marismortui (strain ATCC 43049 / DSM 3752 / JCM 8966 / VKM B-1809)</name>
    <name type="common">Halobacterium marismortui</name>
    <dbReference type="NCBI Taxonomy" id="272569"/>
    <lineage>
        <taxon>Archaea</taxon>
        <taxon>Methanobacteriati</taxon>
        <taxon>Methanobacteriota</taxon>
        <taxon>Stenosarchaea group</taxon>
        <taxon>Halobacteria</taxon>
        <taxon>Halobacteriales</taxon>
        <taxon>Haloarculaceae</taxon>
        <taxon>Haloarcula</taxon>
    </lineage>
</organism>
<proteinExistence type="evidence at protein level"/>
<evidence type="ECO:0000269" key="1">
    <source>
    </source>
</evidence>
<evidence type="ECO:0000305" key="2"/>
<accession>Q5UY95</accession>
<accession>Q5EC62</accession>
<comment type="function">
    <text evidence="1">NADP-dependent D-xylose dehydrogenase involved in the degradation of D-xylose, a major component of hemicelluloses such as xylan. In addition to D-xylose, oxidizes D-ribose at similar kinetic constants, whereas D-glucose is oxidized with about 70-fold lower catalytic efficiency.</text>
</comment>
<comment type="catalytic activity">
    <reaction evidence="1">
        <text>D-xylofuranose + NADP(+) = D-xylono-1,4-lactone + NADPH + H(+)</text>
        <dbReference type="Rhea" id="RHEA:64416"/>
        <dbReference type="ChEBI" id="CHEBI:15378"/>
        <dbReference type="ChEBI" id="CHEBI:16392"/>
        <dbReference type="ChEBI" id="CHEBI:57783"/>
        <dbReference type="ChEBI" id="CHEBI:58349"/>
        <dbReference type="ChEBI" id="CHEBI:146758"/>
        <dbReference type="EC" id="1.1.1.424"/>
    </reaction>
</comment>
<comment type="biophysicochemical properties">
    <kinetics>
        <KM evidence="1">1.2 mM for D-xylose</KM>
        <KM evidence="1">2.3 mM for D-ribose</KM>
        <KM evidence="1">64 mM for D-glucose</KM>
        <KM evidence="1">0.15 mM for NADP(+)</KM>
        <KM evidence="1">0.9 mM for NAD(+)</KM>
        <Vmax evidence="1">100.0 umol/min/mg enzyme toward D-xylose</Vmax>
        <Vmax evidence="1">82.0 umol/min/mg enzyme toward D-ribose</Vmax>
        <Vmax evidence="1">39.0 umol/min/mg enzyme toward D-glucose</Vmax>
        <Vmax evidence="1">2.0 umol/min/mg enzyme toward D-fructose</Vmax>
        <Vmax evidence="1">1.0 umol/min/mg enzyme toward D-arabinose</Vmax>
        <Vmax evidence="1">92.0 umol/min/mg enzyme toward NADP(+)</Vmax>
        <Vmax evidence="1">80.0 umol/min/mg enzyme toward NAD(+)</Vmax>
    </kinetics>
    <phDependence>
        <text evidence="1">Optimum pH is 8.3.</text>
    </phDependence>
</comment>
<comment type="subunit">
    <text evidence="1">Homotretramer.</text>
</comment>
<comment type="induction">
    <text evidence="1">Expression is induced during growth on D-xylose.</text>
</comment>
<comment type="similarity">
    <text evidence="2">Belongs to the Gfo/Idh/MocA family.</text>
</comment>
<name>GFO6_HALMA</name>
<feature type="chain" id="PRO_0000428910" description="D-xylose 1-dehydrogenase [NADP(+)]">
    <location>
        <begin position="1"/>
        <end position="360"/>
    </location>
</feature>
<keyword id="KW-0903">Direct protein sequencing</keyword>
<keyword id="KW-0520">NAD</keyword>
<keyword id="KW-0521">NADP</keyword>
<keyword id="KW-0560">Oxidoreductase</keyword>
<keyword id="KW-1185">Reference proteome</keyword>
<protein>
    <recommendedName>
        <fullName>D-xylose 1-dehydrogenase [NADP(+)]</fullName>
        <shortName>XDH</shortName>
        <ecNumber evidence="1">1.1.1.424</ecNumber>
    </recommendedName>
</protein>
<dbReference type="EC" id="1.1.1.424" evidence="1"/>
<dbReference type="EMBL" id="AY911409">
    <property type="protein sequence ID" value="AAW78223.1"/>
    <property type="molecule type" value="Genomic_DNA"/>
</dbReference>
<dbReference type="EMBL" id="AY596297">
    <property type="protein sequence ID" value="AAV47758.1"/>
    <property type="molecule type" value="Genomic_DNA"/>
</dbReference>
<dbReference type="RefSeq" id="WP_004964872.1">
    <property type="nucleotide sequence ID" value="NZ_CP039138.1"/>
</dbReference>
<dbReference type="SMR" id="Q5UY95"/>
<dbReference type="STRING" id="272569.rrnAC3034"/>
<dbReference type="PaxDb" id="272569-rrnAC3034"/>
<dbReference type="DNASU" id="3130318"/>
<dbReference type="EnsemblBacteria" id="AAV47758">
    <property type="protein sequence ID" value="AAV47758"/>
    <property type="gene ID" value="rrnAC3034"/>
</dbReference>
<dbReference type="GeneID" id="64823732"/>
<dbReference type="KEGG" id="hma:rrnAC3034"/>
<dbReference type="PATRIC" id="fig|272569.17.peg.3586"/>
<dbReference type="eggNOG" id="arCOG01622">
    <property type="taxonomic scope" value="Archaea"/>
</dbReference>
<dbReference type="HOGENOM" id="CLU_023194_5_1_2"/>
<dbReference type="BioCyc" id="MetaCyc:MONOMER-16385"/>
<dbReference type="BRENDA" id="1.1.1.179">
    <property type="organism ID" value="2549"/>
</dbReference>
<dbReference type="BRENDA" id="1.1.1.424">
    <property type="organism ID" value="2549"/>
</dbReference>
<dbReference type="Proteomes" id="UP000001169">
    <property type="component" value="Chromosome I"/>
</dbReference>
<dbReference type="GO" id="GO:0000166">
    <property type="term" value="F:nucleotide binding"/>
    <property type="evidence" value="ECO:0007669"/>
    <property type="project" value="InterPro"/>
</dbReference>
<dbReference type="GO" id="GO:0016491">
    <property type="term" value="F:oxidoreductase activity"/>
    <property type="evidence" value="ECO:0007669"/>
    <property type="project" value="UniProtKB-KW"/>
</dbReference>
<dbReference type="Gene3D" id="3.30.360.10">
    <property type="entry name" value="Dihydrodipicolinate Reductase, domain 2"/>
    <property type="match status" value="1"/>
</dbReference>
<dbReference type="Gene3D" id="3.40.50.720">
    <property type="entry name" value="NAD(P)-binding Rossmann-like Domain"/>
    <property type="match status" value="1"/>
</dbReference>
<dbReference type="InterPro" id="IPR000683">
    <property type="entry name" value="Gfo/Idh/MocA-like_OxRdtase_N"/>
</dbReference>
<dbReference type="InterPro" id="IPR050984">
    <property type="entry name" value="Gfo/Idh/MocA_domain"/>
</dbReference>
<dbReference type="InterPro" id="IPR055170">
    <property type="entry name" value="GFO_IDH_MocA-like_dom"/>
</dbReference>
<dbReference type="InterPro" id="IPR036291">
    <property type="entry name" value="NAD(P)-bd_dom_sf"/>
</dbReference>
<dbReference type="InterPro" id="IPR049838">
    <property type="entry name" value="XacA-like"/>
</dbReference>
<dbReference type="NCBIfam" id="NF041392">
    <property type="entry name" value="XylDh_Gfo6_Halo"/>
    <property type="match status" value="1"/>
</dbReference>
<dbReference type="PANTHER" id="PTHR22604">
    <property type="entry name" value="OXIDOREDUCTASES"/>
    <property type="match status" value="1"/>
</dbReference>
<dbReference type="PANTHER" id="PTHR22604:SF105">
    <property type="entry name" value="TRANS-1,2-DIHYDROBENZENE-1,2-DIOL DEHYDROGENASE"/>
    <property type="match status" value="1"/>
</dbReference>
<dbReference type="Pfam" id="PF01408">
    <property type="entry name" value="GFO_IDH_MocA"/>
    <property type="match status" value="1"/>
</dbReference>
<dbReference type="Pfam" id="PF22725">
    <property type="entry name" value="GFO_IDH_MocA_C3"/>
    <property type="match status" value="1"/>
</dbReference>
<dbReference type="SUPFAM" id="SSF55347">
    <property type="entry name" value="Glyceraldehyde-3-phosphate dehydrogenase-like, C-terminal domain"/>
    <property type="match status" value="1"/>
</dbReference>
<dbReference type="SUPFAM" id="SSF51735">
    <property type="entry name" value="NAD(P)-binding Rossmann-fold domains"/>
    <property type="match status" value="1"/>
</dbReference>
<gene>
    <name type="primary">gfo6</name>
    <name type="synonym">xdh</name>
    <name type="ordered locus">rrnAC3034</name>
</gene>